<organism>
    <name type="scientific">Mycoplasma genitalium (strain ATCC 33530 / DSM 19775 / NCTC 10195 / G37)</name>
    <name type="common">Mycoplasmoides genitalium</name>
    <dbReference type="NCBI Taxonomy" id="243273"/>
    <lineage>
        <taxon>Bacteria</taxon>
        <taxon>Bacillati</taxon>
        <taxon>Mycoplasmatota</taxon>
        <taxon>Mycoplasmoidales</taxon>
        <taxon>Mycoplasmoidaceae</taxon>
        <taxon>Mycoplasmoides</taxon>
    </lineage>
</organism>
<sequence>MFKIVFFGTSTLSKKCLEQLFYDNDFEICAVVTQPDKINHRNNKIVPSDVKSFCLEKNITFFQPKQSISIKADLEKLKADIGICVSFGQYLHQDIIDLFPNKVINLHPSKLPLLRGGAPLHWTIINGFKKSALSVIQLVKKMDAGPIWKQQDFLVNNDWNTGDLSIYVEEHSPSFLIECTKEILNKKGKWFEQIGEPTFGLNIRKEQEHLDLNQIYKSFLNWVKGLAPKPGGWLSFEGKNIKIFKAKYVSKSNYKHQLGEIVNISRKGINIALKSNEIISIEKIQIPGKRVMEVSEIINGKHPFVVGKCFK</sequence>
<dbReference type="EC" id="2.1.2.9" evidence="1"/>
<dbReference type="EMBL" id="L43967">
    <property type="protein sequence ID" value="AAC71592.1"/>
    <property type="molecule type" value="Genomic_DNA"/>
</dbReference>
<dbReference type="PIR" id="D64240">
    <property type="entry name" value="D64240"/>
</dbReference>
<dbReference type="RefSeq" id="WP_010869450.1">
    <property type="nucleotide sequence ID" value="NC_000908.2"/>
</dbReference>
<dbReference type="SMR" id="P47605"/>
<dbReference type="FunCoup" id="P47605">
    <property type="interactions" value="189"/>
</dbReference>
<dbReference type="STRING" id="243273.MG_365"/>
<dbReference type="GeneID" id="88282548"/>
<dbReference type="KEGG" id="mge:MG_365"/>
<dbReference type="eggNOG" id="COG0223">
    <property type="taxonomic scope" value="Bacteria"/>
</dbReference>
<dbReference type="HOGENOM" id="CLU_033347_1_1_14"/>
<dbReference type="InParanoid" id="P47605"/>
<dbReference type="OrthoDB" id="9802815at2"/>
<dbReference type="BioCyc" id="MGEN243273:G1GJ2-459-MONOMER"/>
<dbReference type="Proteomes" id="UP000000807">
    <property type="component" value="Chromosome"/>
</dbReference>
<dbReference type="GO" id="GO:0005829">
    <property type="term" value="C:cytosol"/>
    <property type="evidence" value="ECO:0000318"/>
    <property type="project" value="GO_Central"/>
</dbReference>
<dbReference type="GO" id="GO:0004479">
    <property type="term" value="F:methionyl-tRNA formyltransferase activity"/>
    <property type="evidence" value="ECO:0000318"/>
    <property type="project" value="GO_Central"/>
</dbReference>
<dbReference type="GO" id="GO:0071951">
    <property type="term" value="P:conversion of methionyl-tRNA to N-formyl-methionyl-tRNA"/>
    <property type="evidence" value="ECO:0000318"/>
    <property type="project" value="GO_Central"/>
</dbReference>
<dbReference type="CDD" id="cd08646">
    <property type="entry name" value="FMT_core_Met-tRNA-FMT_N"/>
    <property type="match status" value="1"/>
</dbReference>
<dbReference type="Gene3D" id="3.10.25.10">
    <property type="entry name" value="Formyl transferase, C-terminal domain"/>
    <property type="match status" value="1"/>
</dbReference>
<dbReference type="Gene3D" id="3.40.50.170">
    <property type="entry name" value="Formyl transferase, N-terminal domain"/>
    <property type="match status" value="1"/>
</dbReference>
<dbReference type="InterPro" id="IPR005794">
    <property type="entry name" value="Fmt"/>
</dbReference>
<dbReference type="InterPro" id="IPR005793">
    <property type="entry name" value="Formyl_trans_C"/>
</dbReference>
<dbReference type="InterPro" id="IPR037022">
    <property type="entry name" value="Formyl_trans_C_sf"/>
</dbReference>
<dbReference type="InterPro" id="IPR002376">
    <property type="entry name" value="Formyl_transf_N"/>
</dbReference>
<dbReference type="InterPro" id="IPR036477">
    <property type="entry name" value="Formyl_transf_N_sf"/>
</dbReference>
<dbReference type="InterPro" id="IPR011034">
    <property type="entry name" value="Formyl_transferase-like_C_sf"/>
</dbReference>
<dbReference type="InterPro" id="IPR041711">
    <property type="entry name" value="Met-tRNA-FMT_N"/>
</dbReference>
<dbReference type="NCBIfam" id="TIGR00460">
    <property type="entry name" value="fmt"/>
    <property type="match status" value="1"/>
</dbReference>
<dbReference type="PANTHER" id="PTHR11138">
    <property type="entry name" value="METHIONYL-TRNA FORMYLTRANSFERASE"/>
    <property type="match status" value="1"/>
</dbReference>
<dbReference type="PANTHER" id="PTHR11138:SF5">
    <property type="entry name" value="METHIONYL-TRNA FORMYLTRANSFERASE, MITOCHONDRIAL"/>
    <property type="match status" value="1"/>
</dbReference>
<dbReference type="Pfam" id="PF02911">
    <property type="entry name" value="Formyl_trans_C"/>
    <property type="match status" value="1"/>
</dbReference>
<dbReference type="Pfam" id="PF00551">
    <property type="entry name" value="Formyl_trans_N"/>
    <property type="match status" value="1"/>
</dbReference>
<dbReference type="SUPFAM" id="SSF50486">
    <property type="entry name" value="FMT C-terminal domain-like"/>
    <property type="match status" value="1"/>
</dbReference>
<dbReference type="SUPFAM" id="SSF53328">
    <property type="entry name" value="Formyltransferase"/>
    <property type="match status" value="1"/>
</dbReference>
<keyword id="KW-0648">Protein biosynthesis</keyword>
<keyword id="KW-1185">Reference proteome</keyword>
<keyword id="KW-0808">Transferase</keyword>
<comment type="function">
    <text evidence="1">Attaches a formyl group to the free amino group of methionyl-tRNA(fMet). The formyl group appears to play a dual role in the initiator identity of N-formylmethionyl-tRNA by promoting its recognition by IF2 and preventing the misappropriation of this tRNA by the elongation apparatus.</text>
</comment>
<comment type="catalytic activity">
    <reaction evidence="1">
        <text>L-methionyl-tRNA(fMet) + (6R)-10-formyltetrahydrofolate = N-formyl-L-methionyl-tRNA(fMet) + (6S)-5,6,7,8-tetrahydrofolate + H(+)</text>
        <dbReference type="Rhea" id="RHEA:24380"/>
        <dbReference type="Rhea" id="RHEA-COMP:9952"/>
        <dbReference type="Rhea" id="RHEA-COMP:9953"/>
        <dbReference type="ChEBI" id="CHEBI:15378"/>
        <dbReference type="ChEBI" id="CHEBI:57453"/>
        <dbReference type="ChEBI" id="CHEBI:78530"/>
        <dbReference type="ChEBI" id="CHEBI:78844"/>
        <dbReference type="ChEBI" id="CHEBI:195366"/>
        <dbReference type="EC" id="2.1.2.9"/>
    </reaction>
</comment>
<comment type="similarity">
    <text evidence="2">Belongs to the Fmt family.</text>
</comment>
<name>FMT_MYCGE</name>
<proteinExistence type="inferred from homology"/>
<evidence type="ECO:0000250" key="1">
    <source>
        <dbReference type="UniProtKB" id="P23882"/>
    </source>
</evidence>
<evidence type="ECO:0000305" key="2"/>
<reference key="1">
    <citation type="journal article" date="1995" name="Science">
        <title>The minimal gene complement of Mycoplasma genitalium.</title>
        <authorList>
            <person name="Fraser C.M."/>
            <person name="Gocayne J.D."/>
            <person name="White O."/>
            <person name="Adams M.D."/>
            <person name="Clayton R.A."/>
            <person name="Fleischmann R.D."/>
            <person name="Bult C.J."/>
            <person name="Kerlavage A.R."/>
            <person name="Sutton G.G."/>
            <person name="Kelley J.M."/>
            <person name="Fritchman J.L."/>
            <person name="Weidman J.F."/>
            <person name="Small K.V."/>
            <person name="Sandusky M."/>
            <person name="Fuhrmann J.L."/>
            <person name="Nguyen D.T."/>
            <person name="Utterback T.R."/>
            <person name="Saudek D.M."/>
            <person name="Phillips C.A."/>
            <person name="Merrick J.M."/>
            <person name="Tomb J.-F."/>
            <person name="Dougherty B.A."/>
            <person name="Bott K.F."/>
            <person name="Hu P.-C."/>
            <person name="Lucier T.S."/>
            <person name="Peterson S.N."/>
            <person name="Smith H.O."/>
            <person name="Hutchison C.A. III"/>
            <person name="Venter J.C."/>
        </authorList>
    </citation>
    <scope>NUCLEOTIDE SEQUENCE [LARGE SCALE GENOMIC DNA]</scope>
    <source>
        <strain>ATCC 33530 / DSM 19775 / NCTC 10195 / G37</strain>
    </source>
</reference>
<protein>
    <recommendedName>
        <fullName evidence="1">Methionyl-tRNA formyltransferase</fullName>
        <ecNumber evidence="1">2.1.2.9</ecNumber>
    </recommendedName>
</protein>
<feature type="chain" id="PRO_0000082993" description="Methionyl-tRNA formyltransferase">
    <location>
        <begin position="1"/>
        <end position="311"/>
    </location>
</feature>
<feature type="binding site" evidence="1">
    <location>
        <begin position="109"/>
        <end position="112"/>
    </location>
    <ligand>
        <name>(6S)-5,6,7,8-tetrahydrofolate</name>
        <dbReference type="ChEBI" id="CHEBI:57453"/>
    </ligand>
</feature>
<gene>
    <name type="primary">fmt</name>
    <name type="ordered locus">MG365</name>
</gene>
<accession>P47605</accession>